<dbReference type="EMBL" id="U72039">
    <property type="protein sequence ID" value="AAC31656.1"/>
    <property type="molecule type" value="Genomic_DNA"/>
</dbReference>
<dbReference type="EMBL" id="U09684">
    <property type="protein sequence ID" value="AAC48508.1"/>
    <property type="molecule type" value="Genomic_DNA"/>
</dbReference>
<dbReference type="EMBL" id="U09682">
    <property type="protein sequence ID" value="AAC48506.1"/>
    <property type="molecule type" value="Genomic_DNA"/>
</dbReference>
<dbReference type="SMR" id="O03811"/>
<dbReference type="GO" id="GO:0005743">
    <property type="term" value="C:mitochondrial inner membrane"/>
    <property type="evidence" value="ECO:0007669"/>
    <property type="project" value="UniProtKB-SubCell"/>
</dbReference>
<dbReference type="GO" id="GO:0045275">
    <property type="term" value="C:respiratory chain complex III"/>
    <property type="evidence" value="ECO:0007669"/>
    <property type="project" value="InterPro"/>
</dbReference>
<dbReference type="GO" id="GO:0046872">
    <property type="term" value="F:metal ion binding"/>
    <property type="evidence" value="ECO:0007669"/>
    <property type="project" value="UniProtKB-KW"/>
</dbReference>
<dbReference type="GO" id="GO:0008121">
    <property type="term" value="F:ubiquinol-cytochrome-c reductase activity"/>
    <property type="evidence" value="ECO:0007669"/>
    <property type="project" value="InterPro"/>
</dbReference>
<dbReference type="GO" id="GO:0006122">
    <property type="term" value="P:mitochondrial electron transport, ubiquinol to cytochrome c"/>
    <property type="evidence" value="ECO:0007669"/>
    <property type="project" value="TreeGrafter"/>
</dbReference>
<dbReference type="CDD" id="cd00290">
    <property type="entry name" value="cytochrome_b_C"/>
    <property type="match status" value="1"/>
</dbReference>
<dbReference type="CDD" id="cd00284">
    <property type="entry name" value="Cytochrome_b_N"/>
    <property type="match status" value="1"/>
</dbReference>
<dbReference type="FunFam" id="1.20.810.10:FF:000002">
    <property type="entry name" value="Cytochrome b"/>
    <property type="match status" value="1"/>
</dbReference>
<dbReference type="Gene3D" id="1.20.810.10">
    <property type="entry name" value="Cytochrome Bc1 Complex, Chain C"/>
    <property type="match status" value="1"/>
</dbReference>
<dbReference type="InterPro" id="IPR005798">
    <property type="entry name" value="Cyt_b/b6_C"/>
</dbReference>
<dbReference type="InterPro" id="IPR036150">
    <property type="entry name" value="Cyt_b/b6_C_sf"/>
</dbReference>
<dbReference type="InterPro" id="IPR005797">
    <property type="entry name" value="Cyt_b/b6_N"/>
</dbReference>
<dbReference type="InterPro" id="IPR027387">
    <property type="entry name" value="Cytb/b6-like_sf"/>
</dbReference>
<dbReference type="InterPro" id="IPR030689">
    <property type="entry name" value="Cytochrome_b"/>
</dbReference>
<dbReference type="InterPro" id="IPR048260">
    <property type="entry name" value="Cytochrome_b_C_euk/bac"/>
</dbReference>
<dbReference type="InterPro" id="IPR048259">
    <property type="entry name" value="Cytochrome_b_N_euk/bac"/>
</dbReference>
<dbReference type="InterPro" id="IPR016174">
    <property type="entry name" value="Di-haem_cyt_TM"/>
</dbReference>
<dbReference type="PANTHER" id="PTHR19271">
    <property type="entry name" value="CYTOCHROME B"/>
    <property type="match status" value="1"/>
</dbReference>
<dbReference type="PANTHER" id="PTHR19271:SF16">
    <property type="entry name" value="CYTOCHROME B"/>
    <property type="match status" value="1"/>
</dbReference>
<dbReference type="Pfam" id="PF00032">
    <property type="entry name" value="Cytochrom_B_C"/>
    <property type="match status" value="1"/>
</dbReference>
<dbReference type="Pfam" id="PF00033">
    <property type="entry name" value="Cytochrome_B"/>
    <property type="match status" value="1"/>
</dbReference>
<dbReference type="PIRSF" id="PIRSF038885">
    <property type="entry name" value="COB"/>
    <property type="match status" value="1"/>
</dbReference>
<dbReference type="SUPFAM" id="SSF81648">
    <property type="entry name" value="a domain/subunit of cytochrome bc1 complex (Ubiquinol-cytochrome c reductase)"/>
    <property type="match status" value="1"/>
</dbReference>
<dbReference type="SUPFAM" id="SSF81342">
    <property type="entry name" value="Transmembrane di-heme cytochromes"/>
    <property type="match status" value="1"/>
</dbReference>
<dbReference type="PROSITE" id="PS51003">
    <property type="entry name" value="CYTB_CTER"/>
    <property type="match status" value="1"/>
</dbReference>
<dbReference type="PROSITE" id="PS51002">
    <property type="entry name" value="CYTB_NTER"/>
    <property type="match status" value="1"/>
</dbReference>
<protein>
    <recommendedName>
        <fullName>Cytochrome b</fullName>
    </recommendedName>
    <alternativeName>
        <fullName>Complex III subunit 3</fullName>
    </alternativeName>
    <alternativeName>
        <fullName>Complex III subunit III</fullName>
    </alternativeName>
    <alternativeName>
        <fullName>Cytochrome b-c1 complex subunit 3</fullName>
    </alternativeName>
    <alternativeName>
        <fullName>Ubiquinol-cytochrome-c reductase complex cytochrome b subunit</fullName>
    </alternativeName>
</protein>
<keyword id="KW-0249">Electron transport</keyword>
<keyword id="KW-0349">Heme</keyword>
<keyword id="KW-0408">Iron</keyword>
<keyword id="KW-0472">Membrane</keyword>
<keyword id="KW-0479">Metal-binding</keyword>
<keyword id="KW-0496">Mitochondrion</keyword>
<keyword id="KW-0999">Mitochondrion inner membrane</keyword>
<keyword id="KW-0679">Respiratory chain</keyword>
<keyword id="KW-0812">Transmembrane</keyword>
<keyword id="KW-1133">Transmembrane helix</keyword>
<keyword id="KW-0813">Transport</keyword>
<keyword id="KW-0830">Ubiquinone</keyword>
<name>CYB_PHOPH</name>
<reference key="1">
    <citation type="journal article" date="1996" name="Genetics">
        <title>Effects of character weighting and species sampling on phylogeny reconstruction: a case study based on DNA sequence data in cetaceans.</title>
        <authorList>
            <person name="Milinkovitch M.C."/>
            <person name="LeDuc R.G."/>
            <person name="Adachi J."/>
            <person name="Farnir F."/>
            <person name="Georges M."/>
            <person name="Hasegawa M."/>
        </authorList>
    </citation>
    <scope>NUCLEOTIDE SEQUENCE [GENOMIC DNA]</scope>
</reference>
<reference key="2">
    <citation type="journal article" date="1995" name="Mol. Phylogenet. Evol.">
        <title>Phylogenetic relationships among the true porpoises (Cetacea: Phocoenidae).</title>
        <authorList>
            <person name="Rosel P.E."/>
            <person name="Haygood M.G."/>
            <person name="Perrin W.F."/>
        </authorList>
    </citation>
    <scope>NUCLEOTIDE SEQUENCE [GENOMIC DNA] OF 14-205</scope>
    <source>
        <strain>Isolate 2PP5</strain>
        <strain>Isolate 4PP11</strain>
    </source>
</reference>
<proteinExistence type="inferred from homology"/>
<geneLocation type="mitochondrion"/>
<organism>
    <name type="scientific">Phocoena phocoena</name>
    <name type="common">Harbor porpoise</name>
    <dbReference type="NCBI Taxonomy" id="9742"/>
    <lineage>
        <taxon>Eukaryota</taxon>
        <taxon>Metazoa</taxon>
        <taxon>Chordata</taxon>
        <taxon>Craniata</taxon>
        <taxon>Vertebrata</taxon>
        <taxon>Euteleostomi</taxon>
        <taxon>Mammalia</taxon>
        <taxon>Eutheria</taxon>
        <taxon>Laurasiatheria</taxon>
        <taxon>Artiodactyla</taxon>
        <taxon>Whippomorpha</taxon>
        <taxon>Cetacea</taxon>
        <taxon>Odontoceti</taxon>
        <taxon>Phocoenidae</taxon>
        <taxon>Phocoena</taxon>
    </lineage>
</organism>
<gene>
    <name type="primary">MT-CYB</name>
    <name type="synonym">COB</name>
    <name type="synonym">CYTB</name>
    <name type="synonym">MTCYB</name>
</gene>
<evidence type="ECO:0000250" key="1"/>
<evidence type="ECO:0000250" key="2">
    <source>
        <dbReference type="UniProtKB" id="P00157"/>
    </source>
</evidence>
<evidence type="ECO:0000255" key="3">
    <source>
        <dbReference type="PROSITE-ProRule" id="PRU00967"/>
    </source>
</evidence>
<evidence type="ECO:0000255" key="4">
    <source>
        <dbReference type="PROSITE-ProRule" id="PRU00968"/>
    </source>
</evidence>
<accession>O03811</accession>
<accession>Q35604</accession>
<accession>Q35605</accession>
<sequence length="379" mass="42726">MINIRKTHPLMKIINDALIDLPAPSNISSWWNFGSLLGLCLITQILTGLFLAMHYTPDTSTAFSSVAHICRDVNYGWIIRYLHANGASMFFICLYIHIGRGLYYGSYMFQETWNIGVLLLLMVMATAFVGYVLPWGQMSFWGATVITNLLSAIPYIGSTLVEWIWGGFSVDKATLTRFFAFHFILPFIITALMIVHLLFLHETGSNNPTGIPSNMDMIPFHPYYTIKDILGALLFILTLLTLTLFSPDLLGDPDNYTPANPLSTPAHIKPEWYFLFAYAILRSIPNKLGGVLALLLSILILVLIPMLQTSKQRSMIFRPFSQLLFWTLVADLLTLTWIGGQPVEHPYIIVGQLASILYFLLILVLMPAASIIENKLLKW</sequence>
<comment type="function">
    <text evidence="2">Component of the ubiquinol-cytochrome c reductase complex (complex III or cytochrome b-c1 complex) that is part of the mitochondrial respiratory chain. The b-c1 complex mediates electron transfer from ubiquinol to cytochrome c. Contributes to the generation of a proton gradient across the mitochondrial membrane that is then used for ATP synthesis.</text>
</comment>
<comment type="cofactor">
    <cofactor evidence="2">
        <name>heme b</name>
        <dbReference type="ChEBI" id="CHEBI:60344"/>
    </cofactor>
    <text evidence="2">Binds 2 heme b groups non-covalently.</text>
</comment>
<comment type="subunit">
    <text evidence="2">The cytochrome bc1 complex contains 11 subunits: 3 respiratory subunits (MT-CYB, CYC1 and UQCRFS1), 2 core proteins (UQCRC1 and UQCRC2) and 6 low-molecular weight proteins (UQCRH/QCR6, UQCRB/QCR7, UQCRQ/QCR8, UQCR10/QCR9, UQCR11/QCR10 and a cleavage product of UQCRFS1). This cytochrome bc1 complex then forms a dimer.</text>
</comment>
<comment type="subcellular location">
    <subcellularLocation>
        <location evidence="2">Mitochondrion inner membrane</location>
        <topology evidence="2">Multi-pass membrane protein</topology>
    </subcellularLocation>
</comment>
<comment type="miscellaneous">
    <text evidence="1">Heme 1 (or BL or b562) is low-potential and absorbs at about 562 nm, and heme 2 (or BH or b566) is high-potential and absorbs at about 566 nm.</text>
</comment>
<comment type="similarity">
    <text evidence="3 4">Belongs to the cytochrome b family.</text>
</comment>
<comment type="caution">
    <text evidence="2">The full-length protein contains only eight transmembrane helices, not nine as predicted by bioinformatics tools.</text>
</comment>
<feature type="chain" id="PRO_0000061391" description="Cytochrome b">
    <location>
        <begin position="1"/>
        <end position="379"/>
    </location>
</feature>
<feature type="transmembrane region" description="Helical" evidence="2">
    <location>
        <begin position="33"/>
        <end position="53"/>
    </location>
</feature>
<feature type="transmembrane region" description="Helical" evidence="2">
    <location>
        <begin position="77"/>
        <end position="98"/>
    </location>
</feature>
<feature type="transmembrane region" description="Helical" evidence="2">
    <location>
        <begin position="113"/>
        <end position="133"/>
    </location>
</feature>
<feature type="transmembrane region" description="Helical" evidence="2">
    <location>
        <begin position="178"/>
        <end position="198"/>
    </location>
</feature>
<feature type="transmembrane region" description="Helical" evidence="2">
    <location>
        <begin position="226"/>
        <end position="246"/>
    </location>
</feature>
<feature type="transmembrane region" description="Helical" evidence="2">
    <location>
        <begin position="288"/>
        <end position="308"/>
    </location>
</feature>
<feature type="transmembrane region" description="Helical" evidence="2">
    <location>
        <begin position="320"/>
        <end position="340"/>
    </location>
</feature>
<feature type="transmembrane region" description="Helical" evidence="2">
    <location>
        <begin position="347"/>
        <end position="367"/>
    </location>
</feature>
<feature type="binding site" description="axial binding residue" evidence="2">
    <location>
        <position position="83"/>
    </location>
    <ligand>
        <name>heme b</name>
        <dbReference type="ChEBI" id="CHEBI:60344"/>
        <label>b562</label>
    </ligand>
    <ligandPart>
        <name>Fe</name>
        <dbReference type="ChEBI" id="CHEBI:18248"/>
    </ligandPart>
</feature>
<feature type="binding site" description="axial binding residue" evidence="2">
    <location>
        <position position="97"/>
    </location>
    <ligand>
        <name>heme b</name>
        <dbReference type="ChEBI" id="CHEBI:60344"/>
        <label>b566</label>
    </ligand>
    <ligandPart>
        <name>Fe</name>
        <dbReference type="ChEBI" id="CHEBI:18248"/>
    </ligandPart>
</feature>
<feature type="binding site" description="axial binding residue" evidence="2">
    <location>
        <position position="182"/>
    </location>
    <ligand>
        <name>heme b</name>
        <dbReference type="ChEBI" id="CHEBI:60344"/>
        <label>b562</label>
    </ligand>
    <ligandPart>
        <name>Fe</name>
        <dbReference type="ChEBI" id="CHEBI:18248"/>
    </ligandPart>
</feature>
<feature type="binding site" description="axial binding residue" evidence="2">
    <location>
        <position position="196"/>
    </location>
    <ligand>
        <name>heme b</name>
        <dbReference type="ChEBI" id="CHEBI:60344"/>
        <label>b566</label>
    </ligand>
    <ligandPart>
        <name>Fe</name>
        <dbReference type="ChEBI" id="CHEBI:18248"/>
    </ligandPart>
</feature>
<feature type="binding site" evidence="2">
    <location>
        <position position="201"/>
    </location>
    <ligand>
        <name>a ubiquinone</name>
        <dbReference type="ChEBI" id="CHEBI:16389"/>
    </ligand>
</feature>